<evidence type="ECO:0000250" key="1">
    <source>
        <dbReference type="UniProtKB" id="P62261"/>
    </source>
</evidence>
<evidence type="ECO:0000255" key="2"/>
<evidence type="ECO:0000269" key="3">
    <source>
    </source>
</evidence>
<evidence type="ECO:0000269" key="4">
    <source>
    </source>
</evidence>
<evidence type="ECO:0000269" key="5">
    <source>
    </source>
</evidence>
<evidence type="ECO:0000269" key="6">
    <source>
    </source>
</evidence>
<evidence type="ECO:0000269" key="7">
    <source>
    </source>
</evidence>
<evidence type="ECO:0000269" key="8">
    <source>
    </source>
</evidence>
<evidence type="ECO:0000269" key="9">
    <source>
    </source>
</evidence>
<evidence type="ECO:0000269" key="10">
    <source>
    </source>
</evidence>
<evidence type="ECO:0000269" key="11">
    <source>
    </source>
</evidence>
<evidence type="ECO:0000269" key="12">
    <source>
    </source>
</evidence>
<evidence type="ECO:0000269" key="13">
    <source>
    </source>
</evidence>
<evidence type="ECO:0000303" key="14">
    <source>
    </source>
</evidence>
<evidence type="ECO:0000303" key="15">
    <source>
    </source>
</evidence>
<evidence type="ECO:0000303" key="16">
    <source>
    </source>
</evidence>
<evidence type="ECO:0000303" key="17">
    <source>
    </source>
</evidence>
<evidence type="ECO:0000303" key="18">
    <source>
    </source>
</evidence>
<evidence type="ECO:0000303" key="19">
    <source>
    </source>
</evidence>
<evidence type="ECO:0000303" key="20">
    <source>
    </source>
</evidence>
<evidence type="ECO:0000303" key="21">
    <source>
    </source>
</evidence>
<evidence type="ECO:0000303" key="22">
    <source>
    </source>
</evidence>
<evidence type="ECO:0000303" key="23">
    <source>
    </source>
</evidence>
<evidence type="ECO:0000305" key="24"/>
<evidence type="ECO:0000305" key="25">
    <source>
    </source>
</evidence>
<evidence type="ECO:0000312" key="26">
    <source>
        <dbReference type="EMBL" id="AAZ91664.1"/>
    </source>
</evidence>
<evidence type="ECO:0000312" key="27">
    <source>
        <dbReference type="EMBL" id="EDO79081.1"/>
    </source>
</evidence>
<evidence type="ECO:0000312" key="28">
    <source>
        <dbReference type="EMBL" id="KAE8304865.1"/>
    </source>
</evidence>
<evidence type="ECO:0000312" key="29">
    <source>
        <dbReference type="Proteomes" id="UP000001548"/>
    </source>
</evidence>
<evidence type="ECO:0007744" key="30">
    <source>
        <dbReference type="PDB" id="4F7R"/>
    </source>
</evidence>
<evidence type="ECO:0007744" key="31">
    <source>
        <dbReference type="PDB" id="4ZQ0"/>
    </source>
</evidence>
<evidence type="ECO:0007744" key="32">
    <source>
        <dbReference type="PDB" id="5BY9"/>
    </source>
</evidence>
<evidence type="ECO:0007829" key="33">
    <source>
        <dbReference type="PDB" id="4ZQ0"/>
    </source>
</evidence>
<gene>
    <name evidence="28" type="ORF">GL50803_006430</name>
    <name evidence="27" type="ORF">GL50803_6430</name>
</gene>
<sequence>MAEAFTREDYVFMAQLNENAERYDEMVETMRKISGMEGELSDKERNLLSVAYKNVIGPRRAAWRIVSSIEAKEKGRQKPNAKRIEQIRVYRQKIEKELSDICNDILKLLQEQFVPRSTNADAKVFYYKMQGDYYRYLAEYSSGEDKEKIAGSALNAYNSAFEISQQLPPTHPIRLGLALNFSVFYYEILASPDRACELARKAFDAAITDLDKLTEESYKDSTLIMQLLRDNLNLWVTDSAGDDNAEEK</sequence>
<organism evidence="27">
    <name type="scientific">Giardia intestinalis (strain ATCC 50803 / WB clone C6)</name>
    <name type="common">Giardia lamblia</name>
    <dbReference type="NCBI Taxonomy" id="184922"/>
    <lineage>
        <taxon>Eukaryota</taxon>
        <taxon>Metamonada</taxon>
        <taxon>Diplomonadida</taxon>
        <taxon>Hexamitidae</taxon>
        <taxon>Giardiinae</taxon>
        <taxon>Giardia</taxon>
    </lineage>
</organism>
<keyword id="KW-0002">3D-structure</keyword>
<keyword id="KW-0966">Cell projection</keyword>
<keyword id="KW-0969">Cilium</keyword>
<keyword id="KW-0175">Coiled coil</keyword>
<keyword id="KW-0963">Cytoplasm</keyword>
<keyword id="KW-0206">Cytoskeleton</keyword>
<keyword id="KW-0903">Direct protein sequencing</keyword>
<keyword id="KW-0256">Endoplasmic reticulum</keyword>
<keyword id="KW-0282">Flagellum</keyword>
<keyword id="KW-1017">Isopeptide bond</keyword>
<keyword id="KW-0539">Nucleus</keyword>
<keyword id="KW-0597">Phosphoprotein</keyword>
<keyword id="KW-1185">Reference proteome</keyword>
<reference evidence="26" key="1">
    <citation type="journal article" date="2006" name="J. Biol. Chem.">
        <title>The Giardia duodenalis 14-3-3 protein is post-translationally modified by phosphorylation and polyglycylation of the C-terminal tail.</title>
        <authorList>
            <person name="Lalle M."/>
            <person name="Salzano A.M."/>
            <person name="Crescenzi M."/>
            <person name="Pozio E."/>
        </authorList>
    </citation>
    <scope>NUCLEOTIDE SEQUENCE [GENOMIC DNA]</scope>
    <scope>PROTEIN SEQUENCE OF 202-219</scope>
    <scope>FUNCTION</scope>
    <scope>SUBUNIT</scope>
    <scope>SUBCELLULAR LOCATION</scope>
    <scope>DEVELOPMENTAL STAGE</scope>
    <scope>INDUCTION</scope>
    <scope>PTM</scope>
    <scope>PHOSPHORYLATION AT THR-214</scope>
    <scope>POLYGLYCYLATION</scope>
    <scope>MUTAGENESIS OF LYS-53 AND THR-214</scope>
    <source>
        <strain evidence="14 26">ATCC 50803 / WB clone C6</strain>
    </source>
</reference>
<reference evidence="27 28 29" key="2">
    <citation type="journal article" date="2007" name="Science">
        <title>Genomic minimalism in the early diverging intestinal parasite Giardia lamblia.</title>
        <authorList>
            <person name="Morrison H.G."/>
            <person name="McArthur A.G."/>
            <person name="Gillin F.D."/>
            <person name="Aley S.B."/>
            <person name="Adam R.D."/>
            <person name="Olsen G.J."/>
            <person name="Best A.A."/>
            <person name="Cande W.Z."/>
            <person name="Chen F."/>
            <person name="Cipriano M.J."/>
            <person name="Davids B.J."/>
            <person name="Dawson S.C."/>
            <person name="Elmendorf H.G."/>
            <person name="Hehl A.B."/>
            <person name="Holder M.E."/>
            <person name="Huse S.M."/>
            <person name="Kim U.U."/>
            <person name="Lasek-Nesselquist E."/>
            <person name="Manning G."/>
            <person name="Nigam A."/>
            <person name="Nixon J.E.J."/>
            <person name="Palm D."/>
            <person name="Passamaneck N.E."/>
            <person name="Prabhu A."/>
            <person name="Reich C.I."/>
            <person name="Reiner D.S."/>
            <person name="Samuelson J."/>
            <person name="Svard S.G."/>
            <person name="Sogin M.L."/>
        </authorList>
    </citation>
    <scope>NUCLEOTIDE SEQUENCE [LARGE SCALE GENOMIC DNA]</scope>
    <source>
        <strain evidence="27 28 29">ATCC 50803 / WB clone C6</strain>
    </source>
</reference>
<reference evidence="30" key="3">
    <citation type="journal article" date="2014" name="PLoS ONE">
        <title>The crystal structure of Giardia duodenalis 14-3-3 in the apo form: when protein post-translational modifications make the difference.</title>
        <authorList>
            <person name="Fiorillo A."/>
            <person name="di Marino D."/>
            <person name="Bertuccini L."/>
            <person name="Via A."/>
            <person name="Pozio E."/>
            <person name="Camerini S."/>
            <person name="Ilari A."/>
            <person name="Lalle M."/>
        </authorList>
    </citation>
    <scope>PROTEIN SEQUENCE OF 202-219</scope>
    <scope>X-RAY CRYSTALLOGRAPHY (3.20 ANGSTROMS) OF THE UNPHOSPHORYLATED UNPOLYGLYCYLATED FORM</scope>
    <scope>SUBUNIT</scope>
    <scope>DEVELOPMENTAL STAGE</scope>
    <scope>PTM</scope>
    <scope>IDENTIFICATION BY MASS SPECTROMETRY</scope>
    <scope>PHOSPHORYLATION AT THR-214</scope>
    <scope>POLYGLYCYLATION</scope>
    <scope>MUTAGENESIS OF ARG-200; THR-208; THR-214; GLU-247 AND LYS-248</scope>
    <scope>CIRCULAR DICHROISM ANALYSIS</scope>
    <source>
        <strain evidence="20">ATCC 50803 / WB clone C6</strain>
    </source>
</reference>
<reference key="4">
    <citation type="journal article" date="2011" name="J. Biol. Chem.">
        <title>Giardia duodenalis 14-3-3 protein is polyglycylated by a tubulin tyrosine ligase-like member and deglycylated by two metallocarboxypeptidases.</title>
        <authorList>
            <person name="Lalle M."/>
            <person name="Camerini S."/>
            <person name="Cecchetti S."/>
            <person name="Blasetti Fantauzzi C."/>
            <person name="Crescenzi M."/>
            <person name="Pozio E."/>
        </authorList>
    </citation>
    <scope>PROTEIN SEQUENCE OF 230-248</scope>
    <scope>SUBCELLULAR LOCATION</scope>
    <scope>DEVELOPMENTAL STAGE</scope>
    <scope>PTM</scope>
    <scope>POLYGLYCYLATION</scope>
    <scope>IDENTIFICATION BY MASS SPECTROMETRY</scope>
    <source>
        <strain evidence="17">ATCC 50803 / WB clone C6</strain>
    </source>
</reference>
<reference key="5">
    <citation type="journal article" date="2010" name="Int. J. Parasitol.">
        <title>Involvement of 14-3-3 protein post-translational modifications in Giardia duodenalis encystation.</title>
        <authorList>
            <person name="Lalle M."/>
            <person name="Bavassano C."/>
            <person name="Fratini F."/>
            <person name="Cecchetti S."/>
            <person name="Boisguerin P."/>
            <person name="Crescenzi M."/>
            <person name="Pozio E."/>
        </authorList>
    </citation>
    <scope>FUNCTION</scope>
    <scope>SUBCELLULAR LOCATION</scope>
    <scope>DEVELOPMENTAL STAGE</scope>
    <scope>PTM</scope>
    <scope>PHOSPHORYLATION AT THR-214</scope>
    <scope>GLYCYLATION AT GLU-246</scope>
    <scope>MUTAGENESIS OF LYS-53; VAL-183; THR-214; GLU-246 AND GLU-247</scope>
    <source>
        <strain evidence="15">ATCC 50803 / WB clone C6</strain>
    </source>
</reference>
<reference key="6">
    <citation type="journal article" date="2010" name="Parasitol. Int.">
        <title>Analysis of phosphorylated proteins and inhibition of kinase activity during Giardia intestinalis excystation.</title>
        <authorList>
            <person name="Alvarado M.E."/>
            <person name="Wasserman M."/>
        </authorList>
    </citation>
    <scope>SUBCELLULAR LOCATION</scope>
    <scope>DEVELOPMENTAL STAGE</scope>
    <scope>PHOSPHORYLATION</scope>
    <scope>IDENTIFICATION BY MASS SPECTROMETRY</scope>
    <source>
        <strain evidence="16">ATCC 50803 / WB clone C6</strain>
    </source>
</reference>
<reference key="7">
    <citation type="journal article" date="2012" name="Exp. Parasitol.">
        <title>Differential dissolved protein expression throughout the life cycle of Giardia lamblia.</title>
        <authorList>
            <person name="Lingdan L."/>
            <person name="Pengtao G."/>
            <person name="Wenchao L."/>
            <person name="Jianhua L."/>
            <person name="Ju Y."/>
            <person name="Chengwu L."/>
            <person name="He L."/>
            <person name="Guocai Z."/>
            <person name="Wenzhi R."/>
            <person name="Yujiang C."/>
            <person name="Xichen Z."/>
        </authorList>
    </citation>
    <scope>DEVELOPMENTAL STAGE</scope>
</reference>
<reference key="8">
    <citation type="journal article" date="2012" name="J. Proteome Res.">
        <title>Interaction network of the 14-3-3 protein in the ancient protozoan parasite Giardia duodenalis.</title>
        <authorList>
            <person name="Lalle M."/>
            <person name="Camerini S."/>
            <person name="Cecchetti S."/>
            <person name="Sayadi A."/>
            <person name="Crescenzi M."/>
            <person name="Pozio E."/>
        </authorList>
    </citation>
    <scope>SUBUNIT</scope>
    <scope>INTERACTION WITH GL50803_112076; GL50803_94117; GL50803_11043; GL50803_17143; GL50803_13608; GL50803_22165; GL50803_34684 AND GL50803_17472</scope>
    <scope>SUBCELLULAR LOCATION</scope>
    <scope>DEVELOPMENTAL STAGE</scope>
    <source>
        <strain evidence="18">ATCC 50803 / WB clone C6</strain>
    </source>
</reference>
<reference key="9">
    <citation type="journal article" date="2013" name="PLoS ONE">
        <title>Interkingdom complementation reveals structural conservation and functional divergence of 14-3-3 proteins.</title>
        <authorList>
            <person name="Lalle M."/>
            <person name="Leptourgidou F."/>
            <person name="Camerini S."/>
            <person name="Pozio E."/>
            <person name="Skoulakis E.M."/>
        </authorList>
    </citation>
    <scope>SUBCELLULAR LOCATION</scope>
    <scope>DEVELOPMENTAL STAGE</scope>
    <scope>PHOSPHORYLATION AT THR-214</scope>
    <scope>POLYGLYCYLATION</scope>
</reference>
<reference key="10">
    <citation type="journal article" date="2014" name="Eukaryot. Cell">
        <title>Identification of obscure yet conserved actin-associated proteins in Giardia lamblia.</title>
        <authorList>
            <person name="Paredez A.R."/>
            <person name="Nayeri A."/>
            <person name="Xu J.W."/>
            <person name="Krtkova J."/>
            <person name="Cande W.Z."/>
        </authorList>
    </citation>
    <scope>INTERACTION WITH ACTIN</scope>
    <scope>SUBCELLULAR LOCATION</scope>
    <scope>DEVELOPMENTAL STAGE</scope>
    <scope>IDENTIFICATION BY MASS SPECTROMETRY</scope>
    <source>
        <strain evidence="21">ATCC 50803 / WB clone C6</strain>
    </source>
</reference>
<reference key="11">
    <citation type="journal article" date="2017" name="MSphere">
        <title>14-3-3 Regulates Actin Filament Formation in the Deep-Branching Eukaryote Giardia lamblia.</title>
        <authorList>
            <person name="Krtkova J."/>
            <person name="Xu J."/>
            <person name="Lalle M."/>
            <person name="Steele-Ogus M."/>
            <person name="Alas G.C.M."/>
            <person name="Sept D."/>
            <person name="Paredez A.R."/>
        </authorList>
    </citation>
    <scope>FUNCTION</scope>
    <scope>SUBUNIT</scope>
    <scope>INTERACTION WITH ACTIN</scope>
    <scope>SUBCELLULAR LOCATION</scope>
    <scope>DEVELOPMENTAL STAGE</scope>
    <scope>DISRUPTION PHENOTYPE</scope>
    <source>
        <strain evidence="23">ATCC 50803 / WB clone C6</strain>
    </source>
</reference>
<reference evidence="31 32" key="12">
    <citation type="journal article" date="2015" name="J. Chem. Inf. Model.">
        <title>Molecular Dynamics Simulations and Structural Analysis of Giardia duodenalis 14-3-3 Protein-Protein Interactions.</title>
        <authorList>
            <person name="Cau Y."/>
            <person name="Fiorillo A."/>
            <person name="Mori M."/>
            <person name="Ilari A."/>
            <person name="Botta M."/>
            <person name="Lalle M."/>
        </authorList>
    </citation>
    <scope>X-RAY CRYSTALLOGRAPHY (3.10 ANGSTROMS) OF THE UNPHOSPHORYLATED POLYGLYCYLATION MIMIC MUTANT AND IN COMPLEX WITH SYNTHETIC PHOSPHOPEPTIDE</scope>
    <scope>SUBUNIT</scope>
    <scope>BIOTECHNOLOGY</scope>
    <source>
        <strain evidence="22">ATCC 50803 / WB clone C6</strain>
    </source>
</reference>
<feature type="chain" id="PRO_0000455962" description="14-3-3 protein">
    <location>
        <begin position="1"/>
        <end position="248"/>
    </location>
</feature>
<feature type="coiled-coil region" evidence="2">
    <location>
        <begin position="13"/>
        <end position="33"/>
    </location>
</feature>
<feature type="coiled-coil region" evidence="2">
    <location>
        <begin position="91"/>
        <end position="111"/>
    </location>
</feature>
<feature type="short sequence motif" description="Putative polyglycylation target motif (T/G)X0-1(D/E)X1-3-G(D/E)X1-2(gE)2-4, where X is polar or negatively charged amino acid, and gE is polyglycylated glutamine" evidence="3">
    <location>
        <begin position="237"/>
        <end position="248"/>
    </location>
</feature>
<feature type="binding site" evidence="12 31">
    <location>
        <begin position="135"/>
        <end position="136"/>
    </location>
    <ligand>
        <name>O-phospho-L-serine</name>
        <dbReference type="ChEBI" id="CHEBI:57524"/>
    </ligand>
</feature>
<feature type="site" description="Interaction with phosphoserine" evidence="12 31">
    <location>
        <position position="53"/>
    </location>
</feature>
<feature type="site" description="Interaction with phosphoserine" evidence="12 31">
    <location>
        <position position="60"/>
    </location>
</feature>
<feature type="modified residue" description="Phosphothreonine" evidence="3 4 9 10">
    <location>
        <position position="214"/>
    </location>
</feature>
<feature type="modified residue" description="5-glutamyl polyglycine" evidence="4">
    <location>
        <position position="246"/>
    </location>
</feature>
<feature type="mutagenesis site" description="Loss or strongly decreased binding to synthetic human RAF1 phosphopeptides. Loss of binding to difopein." evidence="3 4">
    <original>K</original>
    <variation>E</variation>
    <location>
        <position position="53"/>
    </location>
</feature>
<feature type="mutagenesis site" description="Loss of binding to difopein." evidence="4">
    <original>V</original>
    <variation>D</variation>
    <location>
        <position position="183"/>
    </location>
</feature>
<feature type="mutagenesis site" description="Increased oligomerization." evidence="10">
    <original>R</original>
    <variation>K</variation>
    <location>
        <position position="200"/>
    </location>
</feature>
<feature type="mutagenesis site" description="Slightly decreased oligomerization." evidence="10">
    <original>T</original>
    <variation>A</variation>
    <location>
        <position position="208"/>
    </location>
</feature>
<feature type="mutagenesis site" description="Loss of phosphorylation by a protein kinase. No effect on subcellular localization. Dramatic decrease in the number of encysting parasites and cysts, but a large increase in the number of trophozoites. In encysting cells of 12 hours, significantly slower cyst conversion rate compared to the wild-type. No effect on binding to difopein. Decreased binding to a number of synthetic phosphopeptides." evidence="3 4">
    <original>T</original>
    <variation>A</variation>
    <location>
        <position position="214"/>
    </location>
</feature>
<feature type="mutagenesis site" description="Phosphomimetic mutant. No effect on oligomerization. No effect on binding to difopein. Altered binding intensity or capability to various synthetic phosphopeptides." evidence="4 10">
    <original>T</original>
    <variation>E</variation>
    <location>
        <position position="214"/>
    </location>
</feature>
<feature type="mutagenesis site" description="Loss of polyglycylation. In trophozoites, encysting cells and cysts, localizes to the nuclei in addition to the cytoplasm. Increased encystation and increased number of cysts. In encysting cells of 12 hours, significantly faster cyst conversion rate compared to the wild-type." evidence="4">
    <original>E</original>
    <variation>A</variation>
    <location>
        <position position="246"/>
    </location>
</feature>
<feature type="mutagenesis site" description="No effect on polyglycylation." evidence="4">
    <original>E</original>
    <variation>A</variation>
    <location>
        <position position="247"/>
    </location>
</feature>
<feature type="mutagenesis site" description="Prevention of oligomerization and filament formation by the polyglycylation of E-246; when associated with K-248 del." evidence="10">
    <location>
        <position position="247"/>
    </location>
</feature>
<feature type="mutagenesis site" description="Prevention of oligomerization and filament formation by the polyglycylation of E-246; when associated with E-247 del." evidence="10">
    <location>
        <position position="248"/>
    </location>
</feature>
<feature type="helix" evidence="33">
    <location>
        <begin position="7"/>
        <end position="19"/>
    </location>
</feature>
<feature type="helix" evidence="33">
    <location>
        <begin position="23"/>
        <end position="34"/>
    </location>
</feature>
<feature type="strand" evidence="33">
    <location>
        <begin position="36"/>
        <end position="38"/>
    </location>
</feature>
<feature type="helix" evidence="33">
    <location>
        <begin position="42"/>
        <end position="75"/>
    </location>
</feature>
<feature type="strand" evidence="33">
    <location>
        <begin position="76"/>
        <end position="78"/>
    </location>
</feature>
<feature type="helix" evidence="33">
    <location>
        <begin position="81"/>
        <end position="111"/>
    </location>
</feature>
<feature type="helix" evidence="33">
    <location>
        <begin position="113"/>
        <end position="116"/>
    </location>
</feature>
<feature type="helix" evidence="33">
    <location>
        <begin position="120"/>
        <end position="138"/>
    </location>
</feature>
<feature type="helix" evidence="33">
    <location>
        <begin position="143"/>
        <end position="164"/>
    </location>
</feature>
<feature type="helix" evidence="33">
    <location>
        <begin position="172"/>
        <end position="187"/>
    </location>
</feature>
<feature type="helix" evidence="33">
    <location>
        <begin position="192"/>
        <end position="209"/>
    </location>
</feature>
<feature type="turn" evidence="33">
    <location>
        <begin position="210"/>
        <end position="212"/>
    </location>
</feature>
<feature type="helix" evidence="33">
    <location>
        <begin position="218"/>
        <end position="235"/>
    </location>
</feature>
<comment type="function">
    <text evidence="1 3 4 13">Adapter protein implicated in the regulation of a large spectrum of both general and specialized signaling pathways. Binds to a large number of partners, usually by recognition of a phosphoserine or phosphothreonine motif. Binding generally results in the modulation of the activity of the binding partner (By similarity). Binds with varying affinity to various synthetic phosphopeptides having a consensus binding motif RSX(pS/pT)XP, called mode-1, where X is any residue and pS/pT is a phosphorylated serine/threonine, and to synthetic phosphopeptides having a consensus binding motif Xp(S/T)X1-2-COOH, called mode-3, in which the phosphorylated residue occupies the penultimate C-terminal position in the target protein, but does not bind to their unphosphorylated counterparts (PubMed:19733174). Binds to synthetic human RAF1 phosphopeptides, but not to their unphosphorylated forms. Binds to difopein, a polypeptide containing a phosphorylation-independent binding motif (PubMed:16368691, PubMed:19733174). Involved in encystation (PubMed:19733174). Involved in cell proliferation. Required for actin and tubulin cytoskeletal organization. Regulates actin filament formation and nuclear size (PubMed:28932813).</text>
</comment>
<comment type="subunit">
    <text evidence="3 7 10 11 12 13">Homodimer (PubMed:16368691, PubMed:22452640, PubMed:24658679, PubMed:26551337, PubMed:28932813). Homodimerizes via N-terminal domains (PubMed:24658679, PubMed:26551337). Oligomerizes forming homotrimers, homotetramers and protein filaments. Oligomerization is hindered by polyglycylation in vivo (PubMed:24658679). Interacts with a large number of both cytosolic and membrane proteins in trophozoites and encysting parasites (PubMed:16368691, PubMed:22452640). Interacts with a serine/threonine protein kinase GL50803_112076 (gCDC7). Component of a multiprotein complex containing gCDC7 and GL50803_94117 (gDBF4), a regulatory subunit of gCDC7, during both the trophozoite and encysting stages of the parasite. Interacts with fructose-bisphosphate aldolase GL50803_11043 (gFBA), pyruvate kinase GL50803_17143 (gPyk), acetyl-CoA synthetase GL50803_13608 (gACS), protein kinase GL50803_22165 (gSTE), DEAD box RNA helicase GL50803_34684 (gVASA) and Golgi/cell cycle associated protein GL50803_17472 (gGCCA) (PubMed:22452640). Interacts with actin (PubMed:24728194, PubMed:28932813). Interacts with both monomeric phosphorylated and unphosphorylated actin. The interaction is enhanced by phosphorylation of actin and inhibited by Rho GTPase Rac (PubMed:28932813).</text>
</comment>
<comment type="subcellular location">
    <subcellularLocation>
        <location evidence="3 4 5 6 9 11 13">Cytoplasm</location>
    </subcellularLocation>
    <subcellularLocation>
        <location evidence="13">Cytoplasm</location>
        <location evidence="13">Cytoskeleton</location>
    </subcellularLocation>
    <subcellularLocation>
        <location evidence="3 4 6 7">Nucleus</location>
    </subcellularLocation>
    <subcellularLocation>
        <location evidence="13">Cell projection</location>
        <location evidence="13">Cilium</location>
        <location evidence="13">Flagellum</location>
    </subcellularLocation>
    <subcellularLocation>
        <location evidence="13">Cytoplasm</location>
        <location evidence="13">Cytoskeleton</location>
        <location evidence="13">Spindle</location>
    </subcellularLocation>
    <subcellularLocation>
        <location evidence="13">Nucleus envelope</location>
    </subcellularLocation>
    <subcellularLocation>
        <location evidence="13">Endoplasmic reticulum</location>
    </subcellularLocation>
    <text evidence="3 4 11 13">In trophozoites and cysts, localizes intensely in the cytoplasm. Not detected in the central area of the cell corresponding to the median body nor in flagella. Detected in the nuclei of the encysting cells. Nuclear localization increases during the transition of cells from the early to the late encysting stage. Does not localize to the encystation-specific vesicles of the encysting cells (PubMed:16368691, PubMed:19733174). In interphase cells, detected throughout the cell with somewhat enriched at the cortex and perinuclear region. Associates with the intracytoplasmic axonemes of all flagella, but it is most apparent in the anterior flagella of interphase cells. Also localizes to the nuclear envelope/endoplasmic reticulum and to the microtubule bare area of the ventral disc during interphase. In mitotic cells, disassociates from the intracytoplasmic axonemes and localizes around the spindle. During cytokinesis, localizes with the ingressing furrow, which does not utilize a contractile ring (PubMed:28932813). Does no colocalize with F-actin (PubMed:24728194, PubMed:28932813).</text>
</comment>
<comment type="developmental stage">
    <text evidence="3 4 5 6 7 8 9 10 11 13">Expressed during excystation, the differentiation from cyst to trophozoite (at protein level) (PubMed:19861170). Expressed in trophozoites (at protein level) (PubMed:19733174, PubMed:21135098, PubMed:22452640, PubMed:23058231, PubMed:24147113, PubMed:24658679, PubMed:24728194, PubMed:28932813). Highly expressed during encystation stage, the differentiation from trophozoite to cyst (at protein level) (PubMed:19733174, PubMed:22452640, PubMed:24147113, PubMed:24658679). Expressed in feces extracted cysts (at protein level) (PubMed:19861170, PubMed:23058231). Expression in them is significantly lower than in trophozoites (at protein level) (PubMed:23058231). Constitutively expressed throughout the life cycle (PubMed:16368691).</text>
</comment>
<comment type="induction">
    <text evidence="3">By encystation.</text>
</comment>
<comment type="PTM">
    <text evidence="3 4 5">Phosphorylated constitutively throughout the life cycle. Phosphorylation is very high in trophozoites and encysting cells of 12 hours (PubMed:16368691). Phosphorylated during excystation (PubMed:19861170). Phosphorylation promotes its binding to various target proteins and is critical for encystation process. Phosphorylation modification is not influenced by polyglycylation modification (PubMed:19733174).</text>
</comment>
<comment type="PTM">
    <text evidence="3 4 6 9 10">Polyglycylated on a glutamate residue, resulting in polyglycine chain on the gamma-carboxyl group (PubMed:16368691, PubMed:19733174, PubMed:21135098, PubMed:24147113, PubMed:24658679). Polyglycylated by the tubulin--tyrosine ligase-like protein GL50803_8456 (gTTLL3). The polyglycine chain is shortened by metallopeptidases of the M20 family, namely dipeptidases GL50803_15832 (gDIP1) and GL50803_8407 (gDIP2) (PubMed:21135098). The length of the polyglycine chain is developmental stage-dependent. In trophozoites, glycine residues range from 10 to 31, with the greatest occurrence of 21 residues. In 12 hour encystation stage, glycine residues range from 6 to 22, with the greatest occurrence of 10 residues. The differential rate of polyglycylation/deglycylation during the encystation process regulates the intracellular localization of this protein. Relocalizes partially from the cytoplasm inside the nuclei following the shortening of the polyglycine chain in encysting cells (PubMed:16368691, PubMed:19733174). Polyglycylation modification is not influenced by phosphorylation modification (PubMed:19733174). Polyglycylation prevents oligomerization in vivo (PubMed:24658679).</text>
</comment>
<comment type="disruption phenotype">
    <text evidence="13">Knockdown with morpholino results in dramatically reduced parasite growth, accumulation of multinucleate cells, abnormal flagellar positioning, and polarity and cytokinesis defects. Overall cytoplasmic actin organization is disrupted with ectopic short actin filaments, however, nuclei are enlarged with actin filaments covering the width of the nuclei.</text>
</comment>
<comment type="biotechnology">
    <text evidence="25">This protein may be used to design small molecules that inhibit its interactions with the target proteins. The inhibitors could be used as drugs to treat giardiasis, a disease caused by this parasite.</text>
</comment>
<comment type="miscellaneous">
    <text evidence="9">Despite sequential and structural similarity, is not a functional ortholog of Drosophila 14-3-3 protein epsilon.</text>
</comment>
<comment type="similarity">
    <text evidence="24">Belongs to the 14-3-3 family.</text>
</comment>
<name>1433_GIAIC</name>
<protein>
    <recommendedName>
        <fullName evidence="14 20 22 23 27">14-3-3 protein</fullName>
    </recommendedName>
    <alternativeName>
        <fullName evidence="23">GI-14-3-3</fullName>
    </alternativeName>
    <alternativeName>
        <fullName evidence="14 15 17 18 19 20 22">g14-3-3</fullName>
    </alternativeName>
</protein>
<proteinExistence type="evidence at protein level"/>
<dbReference type="EMBL" id="DQ146480">
    <property type="protein sequence ID" value="AAZ91664.1"/>
    <property type="molecule type" value="Genomic_DNA"/>
</dbReference>
<dbReference type="EMBL" id="AACB02000020">
    <property type="protein sequence ID" value="EDO79081.1"/>
    <property type="molecule type" value="Genomic_DNA"/>
</dbReference>
<dbReference type="EMBL" id="AACB03000001">
    <property type="protein sequence ID" value="KAE8304865.1"/>
    <property type="molecule type" value="Genomic_DNA"/>
</dbReference>
<dbReference type="RefSeq" id="XP_001706755.1">
    <property type="nucleotide sequence ID" value="XM_001706703.1"/>
</dbReference>
<dbReference type="PDB" id="4F7R">
    <property type="method" value="X-ray"/>
    <property type="resolution" value="3.20 A"/>
    <property type="chains" value="A/B/C/D=1-248"/>
</dbReference>
<dbReference type="PDB" id="4ZQ0">
    <property type="method" value="X-ray"/>
    <property type="resolution" value="3.10 A"/>
    <property type="chains" value="A/B/C/D=5-238"/>
</dbReference>
<dbReference type="PDB" id="5BY9">
    <property type="method" value="X-ray"/>
    <property type="resolution" value="4.00 A"/>
    <property type="chains" value="A/B/C/D=1-246"/>
</dbReference>
<dbReference type="PDBsum" id="4F7R"/>
<dbReference type="PDBsum" id="4ZQ0"/>
<dbReference type="PDBsum" id="5BY9"/>
<dbReference type="SMR" id="E2RU97"/>
<dbReference type="FunCoup" id="E2RU97">
    <property type="interactions" value="206"/>
</dbReference>
<dbReference type="STRING" id="184922.E2RU97"/>
<dbReference type="iPTMnet" id="E2RU97"/>
<dbReference type="EnsemblProtists" id="EDO79081">
    <property type="protein sequence ID" value="EDO79081"/>
    <property type="gene ID" value="GL50803_6430"/>
</dbReference>
<dbReference type="GeneID" id="5699649"/>
<dbReference type="KEGG" id="gla:GL50803_006430"/>
<dbReference type="VEuPathDB" id="GiardiaDB:GL50803_6430"/>
<dbReference type="HOGENOM" id="CLU_058290_0_0_1"/>
<dbReference type="InParanoid" id="E2RU97"/>
<dbReference type="OMA" id="KGCQLAR"/>
<dbReference type="EvolutionaryTrace" id="E2RU97"/>
<dbReference type="Proteomes" id="UP000001548">
    <property type="component" value="Chromosome 5"/>
</dbReference>
<dbReference type="GO" id="GO:0005930">
    <property type="term" value="C:axoneme"/>
    <property type="evidence" value="ECO:0000314"/>
    <property type="project" value="UniProtKB"/>
</dbReference>
<dbReference type="GO" id="GO:0005737">
    <property type="term" value="C:cytoplasm"/>
    <property type="evidence" value="ECO:0000314"/>
    <property type="project" value="UniProtKB"/>
</dbReference>
<dbReference type="GO" id="GO:0005856">
    <property type="term" value="C:cytoskeleton"/>
    <property type="evidence" value="ECO:0000314"/>
    <property type="project" value="UniProtKB"/>
</dbReference>
<dbReference type="GO" id="GO:0005783">
    <property type="term" value="C:endoplasmic reticulum"/>
    <property type="evidence" value="ECO:0000314"/>
    <property type="project" value="UniProtKB"/>
</dbReference>
<dbReference type="GO" id="GO:0031514">
    <property type="term" value="C:motile cilium"/>
    <property type="evidence" value="ECO:0000314"/>
    <property type="project" value="UniProtKB"/>
</dbReference>
<dbReference type="GO" id="GO:0005635">
    <property type="term" value="C:nuclear envelope"/>
    <property type="evidence" value="ECO:0000314"/>
    <property type="project" value="UniProtKB"/>
</dbReference>
<dbReference type="GO" id="GO:0005634">
    <property type="term" value="C:nucleus"/>
    <property type="evidence" value="ECO:0000314"/>
    <property type="project" value="UniProtKB"/>
</dbReference>
<dbReference type="GO" id="GO:0005819">
    <property type="term" value="C:spindle"/>
    <property type="evidence" value="ECO:0000314"/>
    <property type="project" value="UniProtKB"/>
</dbReference>
<dbReference type="GO" id="GO:0003779">
    <property type="term" value="F:actin binding"/>
    <property type="evidence" value="ECO:0000314"/>
    <property type="project" value="UniProtKB"/>
</dbReference>
<dbReference type="GO" id="GO:0042802">
    <property type="term" value="F:identical protein binding"/>
    <property type="evidence" value="ECO:0000314"/>
    <property type="project" value="UniProtKB"/>
</dbReference>
<dbReference type="GO" id="GO:0019900">
    <property type="term" value="F:kinase binding"/>
    <property type="evidence" value="ECO:0000353"/>
    <property type="project" value="UniProtKB"/>
</dbReference>
<dbReference type="GO" id="GO:0051219">
    <property type="term" value="F:phosphoprotein binding"/>
    <property type="evidence" value="ECO:0000314"/>
    <property type="project" value="UniProtKB"/>
</dbReference>
<dbReference type="GO" id="GO:0050815">
    <property type="term" value="F:phosphoserine residue binding"/>
    <property type="evidence" value="ECO:0000314"/>
    <property type="project" value="UniProtKB"/>
</dbReference>
<dbReference type="GO" id="GO:0042803">
    <property type="term" value="F:protein homodimerization activity"/>
    <property type="evidence" value="ECO:0000314"/>
    <property type="project" value="UniProtKB"/>
</dbReference>
<dbReference type="GO" id="GO:0030036">
    <property type="term" value="P:actin cytoskeleton organization"/>
    <property type="evidence" value="ECO:0000315"/>
    <property type="project" value="UniProtKB"/>
</dbReference>
<dbReference type="GO" id="GO:0030010">
    <property type="term" value="P:establishment of cell polarity"/>
    <property type="evidence" value="ECO:0000315"/>
    <property type="project" value="UniProtKB"/>
</dbReference>
<dbReference type="GO" id="GO:0000165">
    <property type="term" value="P:MAPK cascade"/>
    <property type="evidence" value="ECO:0000250"/>
    <property type="project" value="UniProtKB"/>
</dbReference>
<dbReference type="GO" id="GO:0051495">
    <property type="term" value="P:positive regulation of cytoskeleton organization"/>
    <property type="evidence" value="ECO:0000315"/>
    <property type="project" value="UniProtKB"/>
</dbReference>
<dbReference type="GO" id="GO:0051289">
    <property type="term" value="P:protein homotetramerization"/>
    <property type="evidence" value="ECO:0000314"/>
    <property type="project" value="UniProtKB"/>
</dbReference>
<dbReference type="GO" id="GO:0070207">
    <property type="term" value="P:protein homotrimerization"/>
    <property type="evidence" value="ECO:0000314"/>
    <property type="project" value="UniProtKB"/>
</dbReference>
<dbReference type="GO" id="GO:0008104">
    <property type="term" value="P:protein localization"/>
    <property type="evidence" value="ECO:0000318"/>
    <property type="project" value="GO_Central"/>
</dbReference>
<dbReference type="GO" id="GO:0097298">
    <property type="term" value="P:regulation of nucleus size"/>
    <property type="evidence" value="ECO:0000315"/>
    <property type="project" value="UniProtKB"/>
</dbReference>
<dbReference type="GO" id="GO:0007165">
    <property type="term" value="P:signal transduction"/>
    <property type="evidence" value="ECO:0000318"/>
    <property type="project" value="GO_Central"/>
</dbReference>
<dbReference type="CDD" id="cd08774">
    <property type="entry name" value="14-3-3"/>
    <property type="match status" value="1"/>
</dbReference>
<dbReference type="FunFam" id="1.20.190.20:FF:000001">
    <property type="entry name" value="14-3-3 gamma 1"/>
    <property type="match status" value="1"/>
</dbReference>
<dbReference type="Gene3D" id="1.20.190.20">
    <property type="entry name" value="14-3-3 domain"/>
    <property type="match status" value="1"/>
</dbReference>
<dbReference type="InterPro" id="IPR000308">
    <property type="entry name" value="14-3-3"/>
</dbReference>
<dbReference type="InterPro" id="IPR023409">
    <property type="entry name" value="14-3-3_CS"/>
</dbReference>
<dbReference type="InterPro" id="IPR036815">
    <property type="entry name" value="14-3-3_dom_sf"/>
</dbReference>
<dbReference type="InterPro" id="IPR023410">
    <property type="entry name" value="14-3-3_domain"/>
</dbReference>
<dbReference type="PANTHER" id="PTHR18860">
    <property type="entry name" value="14-3-3 PROTEIN"/>
    <property type="match status" value="1"/>
</dbReference>
<dbReference type="Pfam" id="PF00244">
    <property type="entry name" value="14-3-3"/>
    <property type="match status" value="1"/>
</dbReference>
<dbReference type="PIRSF" id="PIRSF000868">
    <property type="entry name" value="14-3-3"/>
    <property type="match status" value="1"/>
</dbReference>
<dbReference type="PRINTS" id="PR00305">
    <property type="entry name" value="1433ZETA"/>
</dbReference>
<dbReference type="SMART" id="SM00101">
    <property type="entry name" value="14_3_3"/>
    <property type="match status" value="1"/>
</dbReference>
<dbReference type="SUPFAM" id="SSF48445">
    <property type="entry name" value="14-3-3 protein"/>
    <property type="match status" value="1"/>
</dbReference>
<dbReference type="PROSITE" id="PS00796">
    <property type="entry name" value="1433_1"/>
    <property type="match status" value="1"/>
</dbReference>
<accession>E2RU97</accession>